<keyword id="KW-1185">Reference proteome</keyword>
<evidence type="ECO:0000305" key="1"/>
<comment type="sequence caution" evidence="1">
    <conflict type="erroneous gene model prediction">
        <sequence resource="EMBL-CDS" id="EAL67519"/>
    </conflict>
</comment>
<accession>Q54W96</accession>
<protein>
    <recommendedName>
        <fullName>Putative uncharacterized protein DDB_G0279811</fullName>
    </recommendedName>
</protein>
<name>Y0630_DICDI</name>
<feature type="chain" id="PRO_0000352457" description="Putative uncharacterized protein DDB_G0279811">
    <location>
        <begin position="1"/>
        <end position="103"/>
    </location>
</feature>
<gene>
    <name type="ORF">DDB_G0279811</name>
</gene>
<proteinExistence type="predicted"/>
<dbReference type="EMBL" id="AAFI02000033">
    <property type="protein sequence ID" value="EAL67519.1"/>
    <property type="status" value="ALT_SEQ"/>
    <property type="molecule type" value="Genomic_DNA"/>
</dbReference>
<dbReference type="RefSeq" id="XP_641496.1">
    <property type="nucleotide sequence ID" value="XM_636404.1"/>
</dbReference>
<dbReference type="EnsemblProtists" id="EAL67519">
    <property type="protein sequence ID" value="EAL67519"/>
    <property type="gene ID" value="DDB_G0279811"/>
</dbReference>
<dbReference type="GeneID" id="8622236"/>
<dbReference type="KEGG" id="ddi:DDB_G0279811"/>
<dbReference type="dictyBase" id="DDB_G0279811"/>
<dbReference type="InParanoid" id="Q54W96"/>
<dbReference type="PRO" id="PR:Q54W96"/>
<dbReference type="Proteomes" id="UP000002195">
    <property type="component" value="Chromosome 3"/>
</dbReference>
<reference key="1">
    <citation type="journal article" date="2005" name="Nature">
        <title>The genome of the social amoeba Dictyostelium discoideum.</title>
        <authorList>
            <person name="Eichinger L."/>
            <person name="Pachebat J.A."/>
            <person name="Gloeckner G."/>
            <person name="Rajandream M.A."/>
            <person name="Sucgang R."/>
            <person name="Berriman M."/>
            <person name="Song J."/>
            <person name="Olsen R."/>
            <person name="Szafranski K."/>
            <person name="Xu Q."/>
            <person name="Tunggal B."/>
            <person name="Kummerfeld S."/>
            <person name="Madera M."/>
            <person name="Konfortov B.A."/>
            <person name="Rivero F."/>
            <person name="Bankier A.T."/>
            <person name="Lehmann R."/>
            <person name="Hamlin N."/>
            <person name="Davies R."/>
            <person name="Gaudet P."/>
            <person name="Fey P."/>
            <person name="Pilcher K."/>
            <person name="Chen G."/>
            <person name="Saunders D."/>
            <person name="Sodergren E.J."/>
            <person name="Davis P."/>
            <person name="Kerhornou A."/>
            <person name="Nie X."/>
            <person name="Hall N."/>
            <person name="Anjard C."/>
            <person name="Hemphill L."/>
            <person name="Bason N."/>
            <person name="Farbrother P."/>
            <person name="Desany B."/>
            <person name="Just E."/>
            <person name="Morio T."/>
            <person name="Rost R."/>
            <person name="Churcher C.M."/>
            <person name="Cooper J."/>
            <person name="Haydock S."/>
            <person name="van Driessche N."/>
            <person name="Cronin A."/>
            <person name="Goodhead I."/>
            <person name="Muzny D.M."/>
            <person name="Mourier T."/>
            <person name="Pain A."/>
            <person name="Lu M."/>
            <person name="Harper D."/>
            <person name="Lindsay R."/>
            <person name="Hauser H."/>
            <person name="James K.D."/>
            <person name="Quiles M."/>
            <person name="Madan Babu M."/>
            <person name="Saito T."/>
            <person name="Buchrieser C."/>
            <person name="Wardroper A."/>
            <person name="Felder M."/>
            <person name="Thangavelu M."/>
            <person name="Johnson D."/>
            <person name="Knights A."/>
            <person name="Loulseged H."/>
            <person name="Mungall K.L."/>
            <person name="Oliver K."/>
            <person name="Price C."/>
            <person name="Quail M.A."/>
            <person name="Urushihara H."/>
            <person name="Hernandez J."/>
            <person name="Rabbinowitsch E."/>
            <person name="Steffen D."/>
            <person name="Sanders M."/>
            <person name="Ma J."/>
            <person name="Kohara Y."/>
            <person name="Sharp S."/>
            <person name="Simmonds M.N."/>
            <person name="Spiegler S."/>
            <person name="Tivey A."/>
            <person name="Sugano S."/>
            <person name="White B."/>
            <person name="Walker D."/>
            <person name="Woodward J.R."/>
            <person name="Winckler T."/>
            <person name="Tanaka Y."/>
            <person name="Shaulsky G."/>
            <person name="Schleicher M."/>
            <person name="Weinstock G.M."/>
            <person name="Rosenthal A."/>
            <person name="Cox E.C."/>
            <person name="Chisholm R.L."/>
            <person name="Gibbs R.A."/>
            <person name="Loomis W.F."/>
            <person name="Platzer M."/>
            <person name="Kay R.R."/>
            <person name="Williams J.G."/>
            <person name="Dear P.H."/>
            <person name="Noegel A.A."/>
            <person name="Barrell B.G."/>
            <person name="Kuspa A."/>
        </authorList>
    </citation>
    <scope>NUCLEOTIDE SEQUENCE [LARGE SCALE GENOMIC DNA]</scope>
    <source>
        <strain>AX4</strain>
    </source>
</reference>
<sequence length="103" mass="12030">MDINNIINNNKNNNDINYFEFPNNFIFVNNNTPPSSPSFSSETSSPPLSPLLPTSCRNDTYNNLVSNSNEGKFVFHNLFINEDNKHLFHKYFTSRKNLYKKYD</sequence>
<organism>
    <name type="scientific">Dictyostelium discoideum</name>
    <name type="common">Social amoeba</name>
    <dbReference type="NCBI Taxonomy" id="44689"/>
    <lineage>
        <taxon>Eukaryota</taxon>
        <taxon>Amoebozoa</taxon>
        <taxon>Evosea</taxon>
        <taxon>Eumycetozoa</taxon>
        <taxon>Dictyostelia</taxon>
        <taxon>Dictyosteliales</taxon>
        <taxon>Dictyosteliaceae</taxon>
        <taxon>Dictyostelium</taxon>
    </lineage>
</organism>